<comment type="function">
    <text evidence="1 8">Involved in the TCA cycle. Catalyzes the stereospecific interconversion of fumarate to L-malate.</text>
</comment>
<comment type="catalytic activity">
    <reaction evidence="1 8">
        <text>(S)-malate = fumarate + H2O</text>
        <dbReference type="Rhea" id="RHEA:12460"/>
        <dbReference type="ChEBI" id="CHEBI:15377"/>
        <dbReference type="ChEBI" id="CHEBI:15589"/>
        <dbReference type="ChEBI" id="CHEBI:29806"/>
        <dbReference type="EC" id="4.2.1.2"/>
    </reaction>
</comment>
<comment type="activity regulation">
    <text evidence="3">Competitively inhibited by N-(5-(azepan-1-ylsulfonyl)-2-methoxyphenyl)- 2-(4-oxo-3,4-dihydrophthalazin-1-yl)acetamide.</text>
</comment>
<comment type="biophysicochemical properties">
    <kinetics>
        <KM evidence="3">260 uM for fumarate</KM>
    </kinetics>
</comment>
<comment type="pathway">
    <text evidence="1 6">Carbohydrate metabolism; tricarboxylic acid cycle; (S)-malate from fumarate: step 1/1.</text>
</comment>
<comment type="subunit">
    <text evidence="1 2 3 4">Homotetramer.</text>
</comment>
<comment type="subcellular location">
    <subcellularLocation>
        <location evidence="1 6">Cytoplasm</location>
    </subcellularLocation>
</comment>
<comment type="miscellaneous">
    <text evidence="1">There are 2 substrate-binding sites: the catalytic A site, and the non-catalytic B site that may play a role in the transfer of substrate or product between the active site and the solvent. Alternatively, the B site may bind allosteric effectors.</text>
</comment>
<comment type="similarity">
    <text evidence="1 6">Belongs to the class-II fumarase/aspartase family. Fumarase subfamily.</text>
</comment>
<name>FUMC_MYCTU</name>
<organism>
    <name type="scientific">Mycobacterium tuberculosis (strain ATCC 25618 / H37Rv)</name>
    <dbReference type="NCBI Taxonomy" id="83332"/>
    <lineage>
        <taxon>Bacteria</taxon>
        <taxon>Bacillati</taxon>
        <taxon>Actinomycetota</taxon>
        <taxon>Actinomycetes</taxon>
        <taxon>Mycobacteriales</taxon>
        <taxon>Mycobacteriaceae</taxon>
        <taxon>Mycobacterium</taxon>
        <taxon>Mycobacterium tuberculosis complex</taxon>
    </lineage>
</organism>
<accession>P9WN93</accession>
<accession>L0T5U4</accession>
<accession>O53446</accession>
<sequence length="474" mass="50141">MAVDADSANYRIEHDTMGEVRVPAKALWRAQTQRAVENFPISGRGLERTQIRALGLLKGACAQVNSDLGLLAPEKADAIIAAAAEIADGQHDDQFPIDVFQTGSGTSSNMNTNEVIASIAAKGGVTLHPNDDVNMSQSSNDTFPTATHIAATEAAVAHLIPALQQLHDALAAKALDWHTVVKSGRTHLMDAVPVTLGQEFSGYARQIEAGIERVRACLPRLGELAIGGTAVGTGLNAPDDFGVRVVAVLVAQTGLSELRTAANSFEAQAARDGLVEASGALRTIAVSLTKIANDIRWMGSGPLTGLAEIQLPDLQPGSSIMPGKVNPVLPEAVTQVAAQVIGNDAAIAWGGANGAFELNVYIPMMARNILESFKLLTNVSRLFAQRCIAGLTANVEHLRRLAESSPSIVTPLNSAIGYEEAAAVAKQALKERKTIRQTVIDRGLIGDRLSIEDLDRRLDVLAMAKAEQLDSDRL</sequence>
<proteinExistence type="evidence at protein level"/>
<evidence type="ECO:0000255" key="1">
    <source>
        <dbReference type="HAMAP-Rule" id="MF_00743"/>
    </source>
</evidence>
<evidence type="ECO:0000269" key="2">
    <source>
    </source>
</evidence>
<evidence type="ECO:0000269" key="3">
    <source>
    </source>
</evidence>
<evidence type="ECO:0000269" key="4">
    <source ref="3"/>
</evidence>
<evidence type="ECO:0000303" key="5">
    <source>
    </source>
</evidence>
<evidence type="ECO:0000305" key="6"/>
<evidence type="ECO:0000305" key="7">
    <source>
    </source>
</evidence>
<evidence type="ECO:0000305" key="8">
    <source>
    </source>
</evidence>
<evidence type="ECO:0007744" key="9">
    <source>
        <dbReference type="PDB" id="4ADL"/>
    </source>
</evidence>
<evidence type="ECO:0007744" key="10">
    <source>
        <dbReference type="PDB" id="4ADM"/>
    </source>
</evidence>
<evidence type="ECO:0007744" key="11">
    <source>
        <dbReference type="PDB" id="4APB"/>
    </source>
</evidence>
<evidence type="ECO:0007744" key="12">
    <source>
        <dbReference type="PDB" id="5F91"/>
    </source>
</evidence>
<evidence type="ECO:0007744" key="13">
    <source>
        <dbReference type="PDB" id="5F92"/>
    </source>
</evidence>
<evidence type="ECO:0007744" key="14">
    <source>
    </source>
</evidence>
<evidence type="ECO:0007829" key="15">
    <source>
        <dbReference type="PDB" id="6S43"/>
    </source>
</evidence>
<evidence type="ECO:0007829" key="16">
    <source>
        <dbReference type="PDB" id="6S7Z"/>
    </source>
</evidence>
<reference key="1">
    <citation type="journal article" date="1998" name="Nature">
        <title>Deciphering the biology of Mycobacterium tuberculosis from the complete genome sequence.</title>
        <authorList>
            <person name="Cole S.T."/>
            <person name="Brosch R."/>
            <person name="Parkhill J."/>
            <person name="Garnier T."/>
            <person name="Churcher C.M."/>
            <person name="Harris D.E."/>
            <person name="Gordon S.V."/>
            <person name="Eiglmeier K."/>
            <person name="Gas S."/>
            <person name="Barry C.E. III"/>
            <person name="Tekaia F."/>
            <person name="Badcock K."/>
            <person name="Basham D."/>
            <person name="Brown D."/>
            <person name="Chillingworth T."/>
            <person name="Connor R."/>
            <person name="Davies R.M."/>
            <person name="Devlin K."/>
            <person name="Feltwell T."/>
            <person name="Gentles S."/>
            <person name="Hamlin N."/>
            <person name="Holroyd S."/>
            <person name="Hornsby T."/>
            <person name="Jagels K."/>
            <person name="Krogh A."/>
            <person name="McLean J."/>
            <person name="Moule S."/>
            <person name="Murphy L.D."/>
            <person name="Oliver S."/>
            <person name="Osborne J."/>
            <person name="Quail M.A."/>
            <person name="Rajandream M.A."/>
            <person name="Rogers J."/>
            <person name="Rutter S."/>
            <person name="Seeger K."/>
            <person name="Skelton S."/>
            <person name="Squares S."/>
            <person name="Squares R."/>
            <person name="Sulston J.E."/>
            <person name="Taylor K."/>
            <person name="Whitehead S."/>
            <person name="Barrell B.G."/>
        </authorList>
    </citation>
    <scope>NUCLEOTIDE SEQUENCE [LARGE SCALE GENOMIC DNA]</scope>
    <source>
        <strain>ATCC 25618 / H37Rv</strain>
    </source>
</reference>
<reference key="2">
    <citation type="journal article" date="2011" name="Mol. Cell. Proteomics">
        <title>Proteogenomic analysis of Mycobacterium tuberculosis by high resolution mass spectrometry.</title>
        <authorList>
            <person name="Kelkar D.S."/>
            <person name="Kumar D."/>
            <person name="Kumar P."/>
            <person name="Balakrishnan L."/>
            <person name="Muthusamy B."/>
            <person name="Yadav A.K."/>
            <person name="Shrivastava P."/>
            <person name="Marimuthu A."/>
            <person name="Anand S."/>
            <person name="Sundaram H."/>
            <person name="Kingsbury R."/>
            <person name="Harsha H.C."/>
            <person name="Nair B."/>
            <person name="Prasad T.S."/>
            <person name="Chauhan D.S."/>
            <person name="Katoch K."/>
            <person name="Katoch V.M."/>
            <person name="Kumar P."/>
            <person name="Chaerkady R."/>
            <person name="Ramachandran S."/>
            <person name="Dash D."/>
            <person name="Pandey A."/>
        </authorList>
    </citation>
    <scope>ACETYLATION [LARGE SCALE ANALYSIS] AT ALA-2</scope>
    <scope>CLEAVAGE OF INITIATOR METHIONINE [LARGE SCALE ANALYSIS]</scope>
    <scope>IDENTIFICATION BY MASS SPECTROMETRY [LARGE SCALE ANALYSIS]</scope>
    <source>
        <strain>ATCC 25618 / H37Rv</strain>
    </source>
</reference>
<reference key="3">
    <citation type="submission" date="2010-07" db="PDB data bank">
        <title>Crystal structure of apo fumarate hydratase from Mycobacterium tuberculosis.</title>
        <authorList>
            <consortium name="Mycobacterium tuberculosis structural genomics consortium (TB)"/>
        </authorList>
    </citation>
    <scope>X-RAY CRYSTALLOGRAPHY (2.48 ANGSTROMS)</scope>
    <scope>SUBUNIT</scope>
</reference>
<reference key="4">
    <citation type="journal article" date="2012" name="FEBS Lett.">
        <title>Conformational changes upon ligand binding in the essential class II fumarase Rv1098c from Mycobacterium tuberculosis.</title>
        <authorList>
            <person name="Mechaly A.E."/>
            <person name="Haouz A."/>
            <person name="Miras I."/>
            <person name="Barilone N."/>
            <person name="Weber P."/>
            <person name="Shepard W."/>
            <person name="Alzari P.M."/>
            <person name="Bellinzoni M."/>
        </authorList>
    </citation>
    <scope>X-RAY CRYSTALLOGRAPHY (1.65 ANGSTROMS) OF MUTANTS ALA-318 AND CYS-318 IN COMPLEX WITH SUBSTRATES AND SUBSTRATE ANALOGS</scope>
    <scope>MUTAGENESIS OF SER-318</scope>
    <scope>ACTIVE SITE</scope>
    <scope>REACTION MECHANISM</scope>
    <scope>SUBUNIT</scope>
</reference>
<reference key="5">
    <citation type="journal article" date="2016" name="Proc. Natl. Acad. Sci. U.S.A.">
        <title>Selective small molecule inhibitor of the Mycobacterium tuberculosis fumarate hydratase reveals an allosteric regulatory site.</title>
        <authorList>
            <person name="Kasbekar M."/>
            <person name="Fischer G."/>
            <person name="Mott B.T."/>
            <person name="Yasgar A."/>
            <person name="Hyvoenen M."/>
            <person name="Boshoff H.I."/>
            <person name="Abell C."/>
            <person name="Barry C.E. III"/>
            <person name="Thomas C.J."/>
        </authorList>
    </citation>
    <scope>X-RAY CRYSTALLOGRAPHY (1.86 ANGSTROMS) IN COMPLEX WITH SUBSTRATE AND SUBSTRATE ANALOGS</scope>
    <scope>FUNCTION</scope>
    <scope>CATALYTIC ACTIVITY</scope>
    <scope>BIOPHYSICOCHEMICAL PROPERTIES</scope>
    <scope>ACTIVITY REGULATION</scope>
    <scope>SUBUNIT</scope>
</reference>
<feature type="initiator methionine" description="Removed" evidence="14">
    <location>
        <position position="1"/>
    </location>
</feature>
<feature type="chain" id="PRO_0000161289" description="Fumarate hydratase class II">
    <location>
        <begin position="2"/>
        <end position="474"/>
    </location>
</feature>
<feature type="active site" description="Proton donor/acceptor" evidence="1 7 9 10">
    <location>
        <position position="187"/>
    </location>
</feature>
<feature type="active site" evidence="1 2 10">
    <location>
        <position position="318"/>
    </location>
</feature>
<feature type="binding site" evidence="1 2 3 9 10 11 13">
    <location>
        <begin position="104"/>
        <end position="106"/>
    </location>
    <ligand>
        <name>substrate</name>
    </ligand>
</feature>
<feature type="binding site" description="in site B" evidence="1">
    <location>
        <begin position="128"/>
        <end position="131"/>
    </location>
    <ligand>
        <name>substrate</name>
    </ligand>
</feature>
<feature type="binding site" evidence="1 2 3 9 10 11 12 13">
    <location>
        <begin position="138"/>
        <end position="140"/>
    </location>
    <ligand>
        <name>substrate</name>
    </ligand>
</feature>
<feature type="binding site" evidence="1 2 3 9 11 12 13">
    <location>
        <position position="186"/>
    </location>
    <ligand>
        <name>substrate</name>
    </ligand>
</feature>
<feature type="binding site" evidence="1 2 3 9 11 13">
    <location>
        <position position="319"/>
    </location>
    <ligand>
        <name>substrate</name>
    </ligand>
</feature>
<feature type="binding site" evidence="1 2 3 9 10 11 12 13">
    <location>
        <begin position="324"/>
        <end position="326"/>
    </location>
    <ligand>
        <name>substrate</name>
    </ligand>
</feature>
<feature type="site" description="Important for catalytic activity" evidence="1">
    <location>
        <position position="331"/>
    </location>
</feature>
<feature type="modified residue" description="N-acetylalanine" evidence="14">
    <location>
        <position position="2"/>
    </location>
</feature>
<feature type="mutagenesis site" description="Absence of fumarase activity." evidence="2">
    <original>S</original>
    <variation>A</variation>
    <variation>C</variation>
    <location>
        <position position="318"/>
    </location>
</feature>
<feature type="strand" evidence="15">
    <location>
        <begin position="12"/>
        <end position="15"/>
    </location>
</feature>
<feature type="strand" evidence="15">
    <location>
        <begin position="18"/>
        <end position="21"/>
    </location>
</feature>
<feature type="helix" evidence="15">
    <location>
        <begin position="30"/>
        <end position="38"/>
    </location>
</feature>
<feature type="strand" evidence="15">
    <location>
        <begin position="41"/>
        <end position="43"/>
    </location>
</feature>
<feature type="helix" evidence="15">
    <location>
        <begin position="48"/>
        <end position="67"/>
    </location>
</feature>
<feature type="helix" evidence="15">
    <location>
        <begin position="73"/>
        <end position="87"/>
    </location>
</feature>
<feature type="turn" evidence="15">
    <location>
        <begin position="88"/>
        <end position="91"/>
    </location>
</feature>
<feature type="helix" evidence="15">
    <location>
        <begin position="92"/>
        <end position="94"/>
    </location>
</feature>
<feature type="strand" evidence="15">
    <location>
        <begin position="99"/>
        <end position="101"/>
    </location>
</feature>
<feature type="helix" evidence="15">
    <location>
        <begin position="106"/>
        <end position="122"/>
    </location>
</feature>
<feature type="helix" evidence="15">
    <location>
        <begin position="129"/>
        <end position="133"/>
    </location>
</feature>
<feature type="turn" evidence="15">
    <location>
        <begin position="134"/>
        <end position="136"/>
    </location>
</feature>
<feature type="turn" evidence="15">
    <location>
        <begin position="139"/>
        <end position="141"/>
    </location>
</feature>
<feature type="helix" evidence="15">
    <location>
        <begin position="142"/>
        <end position="157"/>
    </location>
</feature>
<feature type="helix" evidence="15">
    <location>
        <begin position="159"/>
        <end position="176"/>
    </location>
</feature>
<feature type="turn" evidence="15">
    <location>
        <begin position="177"/>
        <end position="179"/>
    </location>
</feature>
<feature type="strand" evidence="15">
    <location>
        <begin position="181"/>
        <end position="186"/>
    </location>
</feature>
<feature type="strand" evidence="15">
    <location>
        <begin position="189"/>
        <end position="195"/>
    </location>
</feature>
<feature type="helix" evidence="15">
    <location>
        <begin position="196"/>
        <end position="221"/>
    </location>
</feature>
<feature type="turn" evidence="15">
    <location>
        <begin position="229"/>
        <end position="231"/>
    </location>
</feature>
<feature type="helix" evidence="15">
    <location>
        <begin position="241"/>
        <end position="253"/>
    </location>
</feature>
<feature type="helix" evidence="15">
    <location>
        <begin position="266"/>
        <end position="269"/>
    </location>
</feature>
<feature type="helix" evidence="15">
    <location>
        <begin position="272"/>
        <end position="298"/>
    </location>
</feature>
<feature type="strand" evidence="15">
    <location>
        <begin position="302"/>
        <end position="305"/>
    </location>
</feature>
<feature type="strand" evidence="16">
    <location>
        <begin position="308"/>
        <end position="310"/>
    </location>
</feature>
<feature type="strand" evidence="15">
    <location>
        <begin position="319"/>
        <end position="321"/>
    </location>
</feature>
<feature type="helix" evidence="15">
    <location>
        <begin position="328"/>
        <end position="352"/>
    </location>
</feature>
<feature type="helix" evidence="15">
    <location>
        <begin position="362"/>
        <end position="386"/>
    </location>
</feature>
<feature type="turn" evidence="15">
    <location>
        <begin position="387"/>
        <end position="390"/>
    </location>
</feature>
<feature type="helix" evidence="15">
    <location>
        <begin position="395"/>
        <end position="402"/>
    </location>
</feature>
<feature type="helix" evidence="15">
    <location>
        <begin position="406"/>
        <end position="408"/>
    </location>
</feature>
<feature type="helix" evidence="15">
    <location>
        <begin position="410"/>
        <end position="412"/>
    </location>
</feature>
<feature type="helix" evidence="15">
    <location>
        <begin position="413"/>
        <end position="416"/>
    </location>
</feature>
<feature type="helix" evidence="15">
    <location>
        <begin position="418"/>
        <end position="431"/>
    </location>
</feature>
<feature type="helix" evidence="15">
    <location>
        <begin position="435"/>
        <end position="441"/>
    </location>
</feature>
<feature type="strand" evidence="15">
    <location>
        <begin position="446"/>
        <end position="448"/>
    </location>
</feature>
<feature type="helix" evidence="15">
    <location>
        <begin position="451"/>
        <end position="457"/>
    </location>
</feature>
<feature type="helix" evidence="15">
    <location>
        <begin position="460"/>
        <end position="464"/>
    </location>
</feature>
<gene>
    <name evidence="1" type="primary">fumC</name>
    <name type="synonym">fum</name>
    <name type="ordered locus">Rv1098c</name>
    <name type="ORF">MTV017.51c</name>
</gene>
<keyword id="KW-0002">3D-structure</keyword>
<keyword id="KW-0007">Acetylation</keyword>
<keyword id="KW-0963">Cytoplasm</keyword>
<keyword id="KW-0456">Lyase</keyword>
<keyword id="KW-1185">Reference proteome</keyword>
<keyword id="KW-0816">Tricarboxylic acid cycle</keyword>
<dbReference type="EC" id="4.2.1.2" evidence="1 8"/>
<dbReference type="EMBL" id="AL123456">
    <property type="protein sequence ID" value="CCP43851.1"/>
    <property type="molecule type" value="Genomic_DNA"/>
</dbReference>
<dbReference type="PIR" id="H70896">
    <property type="entry name" value="H70896"/>
</dbReference>
<dbReference type="RefSeq" id="NP_215614.1">
    <property type="nucleotide sequence ID" value="NC_000962.3"/>
</dbReference>
<dbReference type="RefSeq" id="WP_003405805.1">
    <property type="nucleotide sequence ID" value="NZ_NVQJ01000021.1"/>
</dbReference>
<dbReference type="PDB" id="3NO9">
    <property type="method" value="X-ray"/>
    <property type="resolution" value="2.48 A"/>
    <property type="chains" value="A/B/C/D=1-474"/>
</dbReference>
<dbReference type="PDB" id="4ADL">
    <property type="method" value="X-ray"/>
    <property type="resolution" value="2.20 A"/>
    <property type="chains" value="A/B/C/D=1-473"/>
</dbReference>
<dbReference type="PDB" id="4ADM">
    <property type="method" value="X-ray"/>
    <property type="resolution" value="1.65 A"/>
    <property type="chains" value="A/B/C/D=1-473"/>
</dbReference>
<dbReference type="PDB" id="4APA">
    <property type="method" value="X-ray"/>
    <property type="resolution" value="2.04 A"/>
    <property type="chains" value="A/B/C/D=2-474"/>
</dbReference>
<dbReference type="PDB" id="4APB">
    <property type="method" value="X-ray"/>
    <property type="resolution" value="1.94 A"/>
    <property type="chains" value="A/B/C/D=2-474"/>
</dbReference>
<dbReference type="PDB" id="5F91">
    <property type="method" value="X-ray"/>
    <property type="resolution" value="2.00 A"/>
    <property type="chains" value="A/B/C/D=2-474"/>
</dbReference>
<dbReference type="PDB" id="5F92">
    <property type="method" value="X-ray"/>
    <property type="resolution" value="1.86 A"/>
    <property type="chains" value="A/B/C/D=2-474"/>
</dbReference>
<dbReference type="PDB" id="6S43">
    <property type="method" value="X-ray"/>
    <property type="resolution" value="1.42 A"/>
    <property type="chains" value="A/B/C/D=1-474"/>
</dbReference>
<dbReference type="PDB" id="6S7K">
    <property type="method" value="X-ray"/>
    <property type="resolution" value="1.55 A"/>
    <property type="chains" value="A/B/C/D=1-474"/>
</dbReference>
<dbReference type="PDB" id="6S7S">
    <property type="method" value="X-ray"/>
    <property type="resolution" value="1.70 A"/>
    <property type="chains" value="A/B/C/D=1-474"/>
</dbReference>
<dbReference type="PDB" id="6S7U">
    <property type="method" value="X-ray"/>
    <property type="resolution" value="1.48 A"/>
    <property type="chains" value="A/B/C/D=1-474"/>
</dbReference>
<dbReference type="PDB" id="6S7W">
    <property type="method" value="X-ray"/>
    <property type="resolution" value="1.44 A"/>
    <property type="chains" value="A/B/C/D=1-474"/>
</dbReference>
<dbReference type="PDB" id="6S7Z">
    <property type="method" value="X-ray"/>
    <property type="resolution" value="1.85 A"/>
    <property type="chains" value="A/B/C/D=1-474"/>
</dbReference>
<dbReference type="PDB" id="6S88">
    <property type="method" value="X-ray"/>
    <property type="resolution" value="1.59 A"/>
    <property type="chains" value="A/B/C/D=1-474"/>
</dbReference>
<dbReference type="PDBsum" id="3NO9"/>
<dbReference type="PDBsum" id="4ADL"/>
<dbReference type="PDBsum" id="4ADM"/>
<dbReference type="PDBsum" id="4APA"/>
<dbReference type="PDBsum" id="4APB"/>
<dbReference type="PDBsum" id="5F91"/>
<dbReference type="PDBsum" id="5F92"/>
<dbReference type="PDBsum" id="6S43"/>
<dbReference type="PDBsum" id="6S7K"/>
<dbReference type="PDBsum" id="6S7S"/>
<dbReference type="PDBsum" id="6S7U"/>
<dbReference type="PDBsum" id="6S7W"/>
<dbReference type="PDBsum" id="6S7Z"/>
<dbReference type="PDBsum" id="6S88"/>
<dbReference type="SMR" id="P9WN93"/>
<dbReference type="FunCoup" id="P9WN93">
    <property type="interactions" value="448"/>
</dbReference>
<dbReference type="MINT" id="P9WN93"/>
<dbReference type="STRING" id="83332.Rv1098c"/>
<dbReference type="iPTMnet" id="P9WN93"/>
<dbReference type="PaxDb" id="83332-Rv1098c"/>
<dbReference type="DNASU" id="885651"/>
<dbReference type="GeneID" id="885651"/>
<dbReference type="KEGG" id="mtu:Rv1098c"/>
<dbReference type="KEGG" id="mtv:RVBD_1098c"/>
<dbReference type="TubercuList" id="Rv1098c"/>
<dbReference type="eggNOG" id="COG0114">
    <property type="taxonomic scope" value="Bacteria"/>
</dbReference>
<dbReference type="InParanoid" id="P9WN93"/>
<dbReference type="OrthoDB" id="9802809at2"/>
<dbReference type="PhylomeDB" id="P9WN93"/>
<dbReference type="BioCyc" id="MetaCyc:G185E-5263-MONOMER"/>
<dbReference type="BRENDA" id="4.2.1.2">
    <property type="organism ID" value="3445"/>
</dbReference>
<dbReference type="SABIO-RK" id="P9WN93"/>
<dbReference type="UniPathway" id="UPA00223">
    <property type="reaction ID" value="UER01007"/>
</dbReference>
<dbReference type="EvolutionaryTrace" id="P9WN93"/>
<dbReference type="Proteomes" id="UP000001584">
    <property type="component" value="Chromosome"/>
</dbReference>
<dbReference type="GO" id="GO:0005829">
    <property type="term" value="C:cytosol"/>
    <property type="evidence" value="ECO:0007005"/>
    <property type="project" value="MTBBASE"/>
</dbReference>
<dbReference type="GO" id="GO:0005576">
    <property type="term" value="C:extracellular region"/>
    <property type="evidence" value="ECO:0007005"/>
    <property type="project" value="MTBBASE"/>
</dbReference>
<dbReference type="GO" id="GO:0009274">
    <property type="term" value="C:peptidoglycan-based cell wall"/>
    <property type="evidence" value="ECO:0007005"/>
    <property type="project" value="MTBBASE"/>
</dbReference>
<dbReference type="GO" id="GO:0005886">
    <property type="term" value="C:plasma membrane"/>
    <property type="evidence" value="ECO:0007005"/>
    <property type="project" value="MTBBASE"/>
</dbReference>
<dbReference type="GO" id="GO:0004333">
    <property type="term" value="F:fumarate hydratase activity"/>
    <property type="evidence" value="ECO:0000314"/>
    <property type="project" value="UniProtKB"/>
</dbReference>
<dbReference type="GO" id="GO:0006106">
    <property type="term" value="P:fumarate metabolic process"/>
    <property type="evidence" value="ECO:0007669"/>
    <property type="project" value="InterPro"/>
</dbReference>
<dbReference type="GO" id="GO:0006099">
    <property type="term" value="P:tricarboxylic acid cycle"/>
    <property type="evidence" value="ECO:0007669"/>
    <property type="project" value="UniProtKB-UniRule"/>
</dbReference>
<dbReference type="CDD" id="cd01362">
    <property type="entry name" value="Fumarase_classII"/>
    <property type="match status" value="1"/>
</dbReference>
<dbReference type="FunFam" id="1.10.40.30:FF:000008">
    <property type="entry name" value="Fumarate hydratase class II"/>
    <property type="match status" value="1"/>
</dbReference>
<dbReference type="FunFam" id="1.10.275.10:FF:000001">
    <property type="entry name" value="Fumarate hydratase, mitochondrial"/>
    <property type="match status" value="1"/>
</dbReference>
<dbReference type="FunFam" id="1.20.200.10:FF:000001">
    <property type="entry name" value="Fumarate hydratase, mitochondrial"/>
    <property type="match status" value="1"/>
</dbReference>
<dbReference type="Gene3D" id="1.10.40.30">
    <property type="entry name" value="Fumarase/aspartase (C-terminal domain)"/>
    <property type="match status" value="1"/>
</dbReference>
<dbReference type="Gene3D" id="1.20.200.10">
    <property type="entry name" value="Fumarase/aspartase (Central domain)"/>
    <property type="match status" value="1"/>
</dbReference>
<dbReference type="Gene3D" id="1.10.275.10">
    <property type="entry name" value="Fumarase/aspartase (N-terminal domain)"/>
    <property type="match status" value="1"/>
</dbReference>
<dbReference type="HAMAP" id="MF_00743">
    <property type="entry name" value="FumaraseC"/>
    <property type="match status" value="1"/>
</dbReference>
<dbReference type="InterPro" id="IPR005677">
    <property type="entry name" value="Fum_hydII"/>
</dbReference>
<dbReference type="InterPro" id="IPR024083">
    <property type="entry name" value="Fumarase/histidase_N"/>
</dbReference>
<dbReference type="InterPro" id="IPR018951">
    <property type="entry name" value="Fumarase_C_C"/>
</dbReference>
<dbReference type="InterPro" id="IPR020557">
    <property type="entry name" value="Fumarate_lyase_CS"/>
</dbReference>
<dbReference type="InterPro" id="IPR000362">
    <property type="entry name" value="Fumarate_lyase_fam"/>
</dbReference>
<dbReference type="InterPro" id="IPR022761">
    <property type="entry name" value="Fumarate_lyase_N"/>
</dbReference>
<dbReference type="InterPro" id="IPR008948">
    <property type="entry name" value="L-Aspartase-like"/>
</dbReference>
<dbReference type="NCBIfam" id="NF008909">
    <property type="entry name" value="PRK12273.1"/>
    <property type="match status" value="1"/>
</dbReference>
<dbReference type="PANTHER" id="PTHR11444">
    <property type="entry name" value="ASPARTATEAMMONIA/ARGININOSUCCINATE/ADENYLOSUCCINATE LYASE"/>
    <property type="match status" value="1"/>
</dbReference>
<dbReference type="PANTHER" id="PTHR11444:SF22">
    <property type="entry name" value="FUMARATE HYDRATASE CLASS II"/>
    <property type="match status" value="1"/>
</dbReference>
<dbReference type="Pfam" id="PF10415">
    <property type="entry name" value="FumaraseC_C"/>
    <property type="match status" value="1"/>
</dbReference>
<dbReference type="Pfam" id="PF00206">
    <property type="entry name" value="Lyase_1"/>
    <property type="match status" value="1"/>
</dbReference>
<dbReference type="PRINTS" id="PR00149">
    <property type="entry name" value="FUMRATELYASE"/>
</dbReference>
<dbReference type="SUPFAM" id="SSF48557">
    <property type="entry name" value="L-aspartase-like"/>
    <property type="match status" value="1"/>
</dbReference>
<dbReference type="PROSITE" id="PS00163">
    <property type="entry name" value="FUMARATE_LYASES"/>
    <property type="match status" value="1"/>
</dbReference>
<protein>
    <recommendedName>
        <fullName evidence="1 5">Fumarate hydratase class II</fullName>
        <shortName evidence="1 5">Fumarase C</shortName>
        <ecNumber evidence="1 8">4.2.1.2</ecNumber>
    </recommendedName>
    <alternativeName>
        <fullName evidence="1">Aerobic fumarase</fullName>
    </alternativeName>
    <alternativeName>
        <fullName evidence="1">Iron-independent fumarase</fullName>
    </alternativeName>
</protein>